<proteinExistence type="inferred from homology"/>
<feature type="chain" id="PRO_0000313216" description="DNA ligase">
    <location>
        <begin position="1"/>
        <end position="659"/>
    </location>
</feature>
<feature type="domain" description="BRCT" evidence="1">
    <location>
        <begin position="582"/>
        <end position="659"/>
    </location>
</feature>
<feature type="active site" description="N6-AMP-lysine intermediate" evidence="1">
    <location>
        <position position="112"/>
    </location>
</feature>
<feature type="binding site" evidence="1">
    <location>
        <begin position="32"/>
        <end position="36"/>
    </location>
    <ligand>
        <name>NAD(+)</name>
        <dbReference type="ChEBI" id="CHEBI:57540"/>
    </ligand>
</feature>
<feature type="binding site" evidence="1">
    <location>
        <begin position="81"/>
        <end position="82"/>
    </location>
    <ligand>
        <name>NAD(+)</name>
        <dbReference type="ChEBI" id="CHEBI:57540"/>
    </ligand>
</feature>
<feature type="binding site" evidence="1">
    <location>
        <position position="110"/>
    </location>
    <ligand>
        <name>NAD(+)</name>
        <dbReference type="ChEBI" id="CHEBI:57540"/>
    </ligand>
</feature>
<feature type="binding site" evidence="1">
    <location>
        <position position="133"/>
    </location>
    <ligand>
        <name>NAD(+)</name>
        <dbReference type="ChEBI" id="CHEBI:57540"/>
    </ligand>
</feature>
<feature type="binding site" evidence="1">
    <location>
        <position position="168"/>
    </location>
    <ligand>
        <name>NAD(+)</name>
        <dbReference type="ChEBI" id="CHEBI:57540"/>
    </ligand>
</feature>
<feature type="binding site" evidence="1">
    <location>
        <position position="284"/>
    </location>
    <ligand>
        <name>NAD(+)</name>
        <dbReference type="ChEBI" id="CHEBI:57540"/>
    </ligand>
</feature>
<feature type="binding site" evidence="1">
    <location>
        <position position="308"/>
    </location>
    <ligand>
        <name>NAD(+)</name>
        <dbReference type="ChEBI" id="CHEBI:57540"/>
    </ligand>
</feature>
<feature type="binding site" evidence="1">
    <location>
        <position position="402"/>
    </location>
    <ligand>
        <name>Zn(2+)</name>
        <dbReference type="ChEBI" id="CHEBI:29105"/>
    </ligand>
</feature>
<feature type="binding site" evidence="1">
    <location>
        <position position="405"/>
    </location>
    <ligand>
        <name>Zn(2+)</name>
        <dbReference type="ChEBI" id="CHEBI:29105"/>
    </ligand>
</feature>
<feature type="binding site" evidence="1">
    <location>
        <position position="420"/>
    </location>
    <ligand>
        <name>Zn(2+)</name>
        <dbReference type="ChEBI" id="CHEBI:29105"/>
    </ligand>
</feature>
<feature type="binding site" evidence="1">
    <location>
        <position position="425"/>
    </location>
    <ligand>
        <name>Zn(2+)</name>
        <dbReference type="ChEBI" id="CHEBI:29105"/>
    </ligand>
</feature>
<name>DNLJ_DESHY</name>
<dbReference type="EC" id="6.5.1.2" evidence="1"/>
<dbReference type="EMBL" id="AP008230">
    <property type="protein sequence ID" value="BAE85677.1"/>
    <property type="molecule type" value="Genomic_DNA"/>
</dbReference>
<dbReference type="RefSeq" id="WP_005812372.1">
    <property type="nucleotide sequence ID" value="NC_007907.1"/>
</dbReference>
<dbReference type="SMR" id="Q24QL5"/>
<dbReference type="STRING" id="138119.DSY3888"/>
<dbReference type="KEGG" id="dsy:DSY3888"/>
<dbReference type="eggNOG" id="COG0272">
    <property type="taxonomic scope" value="Bacteria"/>
</dbReference>
<dbReference type="HOGENOM" id="CLU_007764_2_1_9"/>
<dbReference type="Proteomes" id="UP000001946">
    <property type="component" value="Chromosome"/>
</dbReference>
<dbReference type="GO" id="GO:0005829">
    <property type="term" value="C:cytosol"/>
    <property type="evidence" value="ECO:0007669"/>
    <property type="project" value="TreeGrafter"/>
</dbReference>
<dbReference type="GO" id="GO:0003677">
    <property type="term" value="F:DNA binding"/>
    <property type="evidence" value="ECO:0007669"/>
    <property type="project" value="InterPro"/>
</dbReference>
<dbReference type="GO" id="GO:0003911">
    <property type="term" value="F:DNA ligase (NAD+) activity"/>
    <property type="evidence" value="ECO:0007669"/>
    <property type="project" value="UniProtKB-UniRule"/>
</dbReference>
<dbReference type="GO" id="GO:0046872">
    <property type="term" value="F:metal ion binding"/>
    <property type="evidence" value="ECO:0007669"/>
    <property type="project" value="UniProtKB-KW"/>
</dbReference>
<dbReference type="GO" id="GO:0006281">
    <property type="term" value="P:DNA repair"/>
    <property type="evidence" value="ECO:0007669"/>
    <property type="project" value="UniProtKB-KW"/>
</dbReference>
<dbReference type="GO" id="GO:0006260">
    <property type="term" value="P:DNA replication"/>
    <property type="evidence" value="ECO:0007669"/>
    <property type="project" value="UniProtKB-KW"/>
</dbReference>
<dbReference type="CDD" id="cd17748">
    <property type="entry name" value="BRCT_DNA_ligase_like"/>
    <property type="match status" value="1"/>
</dbReference>
<dbReference type="CDD" id="cd00114">
    <property type="entry name" value="LIGANc"/>
    <property type="match status" value="1"/>
</dbReference>
<dbReference type="FunFam" id="1.10.150.20:FF:000006">
    <property type="entry name" value="DNA ligase"/>
    <property type="match status" value="1"/>
</dbReference>
<dbReference type="FunFam" id="1.10.150.20:FF:000007">
    <property type="entry name" value="DNA ligase"/>
    <property type="match status" value="1"/>
</dbReference>
<dbReference type="FunFam" id="1.10.287.610:FF:000002">
    <property type="entry name" value="DNA ligase"/>
    <property type="match status" value="1"/>
</dbReference>
<dbReference type="FunFam" id="2.40.50.140:FF:000012">
    <property type="entry name" value="DNA ligase"/>
    <property type="match status" value="1"/>
</dbReference>
<dbReference type="FunFam" id="3.30.470.30:FF:000001">
    <property type="entry name" value="DNA ligase"/>
    <property type="match status" value="1"/>
</dbReference>
<dbReference type="Gene3D" id="6.20.10.30">
    <property type="match status" value="1"/>
</dbReference>
<dbReference type="Gene3D" id="1.10.150.20">
    <property type="entry name" value="5' to 3' exonuclease, C-terminal subdomain"/>
    <property type="match status" value="2"/>
</dbReference>
<dbReference type="Gene3D" id="3.40.50.10190">
    <property type="entry name" value="BRCT domain"/>
    <property type="match status" value="1"/>
</dbReference>
<dbReference type="Gene3D" id="3.30.470.30">
    <property type="entry name" value="DNA ligase/mRNA capping enzyme"/>
    <property type="match status" value="1"/>
</dbReference>
<dbReference type="Gene3D" id="1.10.287.610">
    <property type="entry name" value="Helix hairpin bin"/>
    <property type="match status" value="1"/>
</dbReference>
<dbReference type="Gene3D" id="2.40.50.140">
    <property type="entry name" value="Nucleic acid-binding proteins"/>
    <property type="match status" value="1"/>
</dbReference>
<dbReference type="HAMAP" id="MF_01588">
    <property type="entry name" value="DNA_ligase_A"/>
    <property type="match status" value="1"/>
</dbReference>
<dbReference type="InterPro" id="IPR001357">
    <property type="entry name" value="BRCT_dom"/>
</dbReference>
<dbReference type="InterPro" id="IPR036420">
    <property type="entry name" value="BRCT_dom_sf"/>
</dbReference>
<dbReference type="InterPro" id="IPR041663">
    <property type="entry name" value="DisA/LigA_HHH"/>
</dbReference>
<dbReference type="InterPro" id="IPR001679">
    <property type="entry name" value="DNA_ligase"/>
</dbReference>
<dbReference type="InterPro" id="IPR033136">
    <property type="entry name" value="DNA_ligase_CS"/>
</dbReference>
<dbReference type="InterPro" id="IPR013839">
    <property type="entry name" value="DNAligase_adenylation"/>
</dbReference>
<dbReference type="InterPro" id="IPR013840">
    <property type="entry name" value="DNAligase_N"/>
</dbReference>
<dbReference type="InterPro" id="IPR003583">
    <property type="entry name" value="Hlx-hairpin-Hlx_DNA-bd_motif"/>
</dbReference>
<dbReference type="InterPro" id="IPR012340">
    <property type="entry name" value="NA-bd_OB-fold"/>
</dbReference>
<dbReference type="InterPro" id="IPR004150">
    <property type="entry name" value="NAD_DNA_ligase_OB"/>
</dbReference>
<dbReference type="InterPro" id="IPR010994">
    <property type="entry name" value="RuvA_2-like"/>
</dbReference>
<dbReference type="InterPro" id="IPR004149">
    <property type="entry name" value="Znf_DNAligase_C4"/>
</dbReference>
<dbReference type="NCBIfam" id="TIGR00575">
    <property type="entry name" value="dnlj"/>
    <property type="match status" value="1"/>
</dbReference>
<dbReference type="NCBIfam" id="NF005932">
    <property type="entry name" value="PRK07956.1"/>
    <property type="match status" value="1"/>
</dbReference>
<dbReference type="PANTHER" id="PTHR23389">
    <property type="entry name" value="CHROMOSOME TRANSMISSION FIDELITY FACTOR 18"/>
    <property type="match status" value="1"/>
</dbReference>
<dbReference type="PANTHER" id="PTHR23389:SF9">
    <property type="entry name" value="DNA LIGASE"/>
    <property type="match status" value="1"/>
</dbReference>
<dbReference type="Pfam" id="PF00533">
    <property type="entry name" value="BRCT"/>
    <property type="match status" value="1"/>
</dbReference>
<dbReference type="Pfam" id="PF01653">
    <property type="entry name" value="DNA_ligase_aden"/>
    <property type="match status" value="1"/>
</dbReference>
<dbReference type="Pfam" id="PF03120">
    <property type="entry name" value="DNA_ligase_OB"/>
    <property type="match status" value="1"/>
</dbReference>
<dbReference type="Pfam" id="PF03119">
    <property type="entry name" value="DNA_ligase_ZBD"/>
    <property type="match status" value="1"/>
</dbReference>
<dbReference type="Pfam" id="PF12826">
    <property type="entry name" value="HHH_2"/>
    <property type="match status" value="1"/>
</dbReference>
<dbReference type="Pfam" id="PF14520">
    <property type="entry name" value="HHH_5"/>
    <property type="match status" value="1"/>
</dbReference>
<dbReference type="Pfam" id="PF22745">
    <property type="entry name" value="Nlig-Ia"/>
    <property type="match status" value="1"/>
</dbReference>
<dbReference type="PIRSF" id="PIRSF001604">
    <property type="entry name" value="LigA"/>
    <property type="match status" value="1"/>
</dbReference>
<dbReference type="SMART" id="SM00292">
    <property type="entry name" value="BRCT"/>
    <property type="match status" value="1"/>
</dbReference>
<dbReference type="SMART" id="SM00278">
    <property type="entry name" value="HhH1"/>
    <property type="match status" value="3"/>
</dbReference>
<dbReference type="SMART" id="SM00532">
    <property type="entry name" value="LIGANc"/>
    <property type="match status" value="1"/>
</dbReference>
<dbReference type="SUPFAM" id="SSF52113">
    <property type="entry name" value="BRCT domain"/>
    <property type="match status" value="1"/>
</dbReference>
<dbReference type="SUPFAM" id="SSF56091">
    <property type="entry name" value="DNA ligase/mRNA capping enzyme, catalytic domain"/>
    <property type="match status" value="1"/>
</dbReference>
<dbReference type="SUPFAM" id="SSF50249">
    <property type="entry name" value="Nucleic acid-binding proteins"/>
    <property type="match status" value="1"/>
</dbReference>
<dbReference type="SUPFAM" id="SSF47781">
    <property type="entry name" value="RuvA domain 2-like"/>
    <property type="match status" value="1"/>
</dbReference>
<dbReference type="PROSITE" id="PS50172">
    <property type="entry name" value="BRCT"/>
    <property type="match status" value="1"/>
</dbReference>
<dbReference type="PROSITE" id="PS01056">
    <property type="entry name" value="DNA_LIGASE_N2"/>
    <property type="match status" value="1"/>
</dbReference>
<sequence length="659" mass="72979">MPDVSQRIEALREQIEEANYQYYGLDQPTLSDAEYDALLQELIRLEKEHPEFLTPDSPSQRVGGYIAKEFPKVRHAEALLSLDNAFDAGDLLEFDRRVRALVAEVEYVVELKIDGLTVALTYEDGALVRGATRGDGEVGEEITANLKTIPAIPLRLRKQADRLDVRGEGYMPKGSFLRLNQEREEAGQPLFANPRNAAAGSLRQLDSRITAQRKLGYFAYQVLTPEEGELASQTAVLDYLKEQGFSVNPEYRVFSAIEEVIAYCGEMVEKRHNYPYDIDGLVIKVNDIAQQRELGFTAKSPRWAIAYKFPAEQVETVVEDIVIRVGRTGVLTPTAYLTPVFVAGSTVGRATLHNLDNIRAKDVRIGDHVLIQKAGDVIPEVVKILPEKRTGGERIFEMPELCPECQSPVIREEGEAAHRCTSITCPARQREAIIHFVSRNAMNIDGLGPAVIYQLLEAGLIKDAADLYALEYDALVPLERLGKKSAENLLKAIEDSKERGLAPLIFGLGIRHVGEKAGKILAQKYGTMEDLEKAQVEELQEIPDVGPAMAQSVAQFFQQESTHHFLNKLRQAGVVMSAQHSAKPQIFAGKSIVVTGSLQRWDRHYVETMIEEFGGKAASSVSKKTAFVVAGEKAGSKLAKAKELGIPVLSEEEFAELLP</sequence>
<organism>
    <name type="scientific">Desulfitobacterium hafniense (strain Y51)</name>
    <dbReference type="NCBI Taxonomy" id="138119"/>
    <lineage>
        <taxon>Bacteria</taxon>
        <taxon>Bacillati</taxon>
        <taxon>Bacillota</taxon>
        <taxon>Clostridia</taxon>
        <taxon>Eubacteriales</taxon>
        <taxon>Desulfitobacteriaceae</taxon>
        <taxon>Desulfitobacterium</taxon>
    </lineage>
</organism>
<comment type="function">
    <text evidence="1">DNA ligase that catalyzes the formation of phosphodiester linkages between 5'-phosphoryl and 3'-hydroxyl groups in double-stranded DNA using NAD as a coenzyme and as the energy source for the reaction. It is essential for DNA replication and repair of damaged DNA.</text>
</comment>
<comment type="catalytic activity">
    <reaction evidence="1">
        <text>NAD(+) + (deoxyribonucleotide)n-3'-hydroxyl + 5'-phospho-(deoxyribonucleotide)m = (deoxyribonucleotide)n+m + AMP + beta-nicotinamide D-nucleotide.</text>
        <dbReference type="EC" id="6.5.1.2"/>
    </reaction>
</comment>
<comment type="cofactor">
    <cofactor evidence="1">
        <name>Mg(2+)</name>
        <dbReference type="ChEBI" id="CHEBI:18420"/>
    </cofactor>
    <cofactor evidence="1">
        <name>Mn(2+)</name>
        <dbReference type="ChEBI" id="CHEBI:29035"/>
    </cofactor>
</comment>
<comment type="similarity">
    <text evidence="1">Belongs to the NAD-dependent DNA ligase family. LigA subfamily.</text>
</comment>
<reference key="1">
    <citation type="journal article" date="2006" name="J. Bacteriol.">
        <title>Complete genome sequence of the dehalorespiring bacterium Desulfitobacterium hafniense Y51 and comparison with Dehalococcoides ethenogenes 195.</title>
        <authorList>
            <person name="Nonaka H."/>
            <person name="Keresztes G."/>
            <person name="Shinoda Y."/>
            <person name="Ikenaga Y."/>
            <person name="Abe M."/>
            <person name="Naito K."/>
            <person name="Inatomi K."/>
            <person name="Furukawa K."/>
            <person name="Inui M."/>
            <person name="Yukawa H."/>
        </authorList>
    </citation>
    <scope>NUCLEOTIDE SEQUENCE [LARGE SCALE GENOMIC DNA]</scope>
    <source>
        <strain>Y51</strain>
    </source>
</reference>
<protein>
    <recommendedName>
        <fullName evidence="1">DNA ligase</fullName>
        <ecNumber evidence="1">6.5.1.2</ecNumber>
    </recommendedName>
    <alternativeName>
        <fullName evidence="1">Polydeoxyribonucleotide synthase [NAD(+)]</fullName>
    </alternativeName>
</protein>
<gene>
    <name evidence="1" type="primary">ligA</name>
    <name type="ordered locus">DSY3888</name>
</gene>
<accession>Q24QL5</accession>
<keyword id="KW-0227">DNA damage</keyword>
<keyword id="KW-0234">DNA repair</keyword>
<keyword id="KW-0235">DNA replication</keyword>
<keyword id="KW-0436">Ligase</keyword>
<keyword id="KW-0460">Magnesium</keyword>
<keyword id="KW-0464">Manganese</keyword>
<keyword id="KW-0479">Metal-binding</keyword>
<keyword id="KW-0520">NAD</keyword>
<keyword id="KW-1185">Reference proteome</keyword>
<keyword id="KW-0862">Zinc</keyword>
<evidence type="ECO:0000255" key="1">
    <source>
        <dbReference type="HAMAP-Rule" id="MF_01588"/>
    </source>
</evidence>